<accession>Q28EX9</accession>
<accession>A4IHX3</accession>
<sequence length="318" mass="36854">MTLSLIIKWGGQEFPLSALSEEDTVLDLKHSLKSLTGVLPERMKLLGLKYKGKPAENDVKLGVLKLKPNTKIMMMGTREESLEEMMAPPPENDEVVNDFDIEEEVVEVENREENLAKISRRVKDYKIEILNPPREGKKLLVLDVDYTLFDHRSCAETGQELMRPYLHEFLTSAYEDYDIVIWSATSMKWIEAKMKELGVSTNSNYKITFMLDSAAMITVHTPRRGLVDVKPLGVIWGKYGEFYNKNNTIMFDDIGRNFLMNPQNGLKIRPFMKAHLNRDKDKELLKLSQYLKEIAQLDDLSELNHKHWERYLVKKQGQ</sequence>
<keyword id="KW-0378">Hydrolase</keyword>
<keyword id="KW-0460">Magnesium</keyword>
<keyword id="KW-0479">Metal-binding</keyword>
<keyword id="KW-0539">Nucleus</keyword>
<keyword id="KW-0904">Protein phosphatase</keyword>
<keyword id="KW-1185">Reference proteome</keyword>
<gene>
    <name type="primary">ublcp1</name>
    <name type="ORF">TGas135j05.1</name>
</gene>
<name>UBCP1_XENTR</name>
<comment type="function">
    <text evidence="1">Dephosphorylates 26S nuclear proteasomes, thereby decreasing their proteolytic activity. Recruited to the 19S regulatory particle of the 26S proteasome where it dephosphorylates 19S component psmc2 which impairs psmc2 ATPase activity and disrupts 26S proteasome assembly. Has also been reported to stimulate the proteolytic activity of the 26S proteasome.</text>
</comment>
<comment type="catalytic activity">
    <reaction evidence="1">
        <text>O-phospho-L-seryl-[protein] + H2O = L-seryl-[protein] + phosphate</text>
        <dbReference type="Rhea" id="RHEA:20629"/>
        <dbReference type="Rhea" id="RHEA-COMP:9863"/>
        <dbReference type="Rhea" id="RHEA-COMP:11604"/>
        <dbReference type="ChEBI" id="CHEBI:15377"/>
        <dbReference type="ChEBI" id="CHEBI:29999"/>
        <dbReference type="ChEBI" id="CHEBI:43474"/>
        <dbReference type="ChEBI" id="CHEBI:83421"/>
        <dbReference type="EC" id="3.1.3.16"/>
    </reaction>
</comment>
<comment type="catalytic activity">
    <reaction evidence="1">
        <text>O-phospho-L-threonyl-[protein] + H2O = L-threonyl-[protein] + phosphate</text>
        <dbReference type="Rhea" id="RHEA:47004"/>
        <dbReference type="Rhea" id="RHEA-COMP:11060"/>
        <dbReference type="Rhea" id="RHEA-COMP:11605"/>
        <dbReference type="ChEBI" id="CHEBI:15377"/>
        <dbReference type="ChEBI" id="CHEBI:30013"/>
        <dbReference type="ChEBI" id="CHEBI:43474"/>
        <dbReference type="ChEBI" id="CHEBI:61977"/>
        <dbReference type="EC" id="3.1.3.16"/>
    </reaction>
</comment>
<comment type="cofactor">
    <cofactor evidence="1">
        <name>Mg(2+)</name>
        <dbReference type="ChEBI" id="CHEBI:18420"/>
    </cofactor>
</comment>
<comment type="subcellular location">
    <subcellularLocation>
        <location evidence="1">Nucleus</location>
    </subcellularLocation>
    <text evidence="1">Colocalizes with nuclear proteasomes.</text>
</comment>
<comment type="domain">
    <text evidence="1">The Ubiquitin-like domain mediates interaction with proteasomes.</text>
</comment>
<protein>
    <recommendedName>
        <fullName>Ubiquitin-like domain-containing CTD phosphatase 1</fullName>
        <ecNumber evidence="1">3.1.3.16</ecNumber>
    </recommendedName>
    <alternativeName>
        <fullName>Nuclear proteasome inhibitor UBLCP1</fullName>
    </alternativeName>
</protein>
<reference key="1">
    <citation type="submission" date="2006-03" db="EMBL/GenBank/DDBJ databases">
        <authorList>
            <consortium name="NIH - Xenopus Gene Collection (XGC) project"/>
        </authorList>
    </citation>
    <scope>NUCLEOTIDE SEQUENCE [LARGE SCALE MRNA]</scope>
    <source>
        <tissue>Gastrula</tissue>
    </source>
</reference>
<reference key="2">
    <citation type="submission" date="2007-03" db="EMBL/GenBank/DDBJ databases">
        <authorList>
            <consortium name="NIH - Xenopus Gene Collection (XGC) project"/>
        </authorList>
    </citation>
    <scope>NUCLEOTIDE SEQUENCE [LARGE SCALE MRNA]</scope>
    <source>
        <tissue>Embryo</tissue>
    </source>
</reference>
<organism>
    <name type="scientific">Xenopus tropicalis</name>
    <name type="common">Western clawed frog</name>
    <name type="synonym">Silurana tropicalis</name>
    <dbReference type="NCBI Taxonomy" id="8364"/>
    <lineage>
        <taxon>Eukaryota</taxon>
        <taxon>Metazoa</taxon>
        <taxon>Chordata</taxon>
        <taxon>Craniata</taxon>
        <taxon>Vertebrata</taxon>
        <taxon>Euteleostomi</taxon>
        <taxon>Amphibia</taxon>
        <taxon>Batrachia</taxon>
        <taxon>Anura</taxon>
        <taxon>Pipoidea</taxon>
        <taxon>Pipidae</taxon>
        <taxon>Xenopodinae</taxon>
        <taxon>Xenopus</taxon>
        <taxon>Silurana</taxon>
    </lineage>
</organism>
<dbReference type="EC" id="3.1.3.16" evidence="1"/>
<dbReference type="EMBL" id="CR762286">
    <property type="protein sequence ID" value="CAJ83586.1"/>
    <property type="molecule type" value="mRNA"/>
</dbReference>
<dbReference type="EMBL" id="BC135735">
    <property type="protein sequence ID" value="AAI35736.1"/>
    <property type="molecule type" value="mRNA"/>
</dbReference>
<dbReference type="RefSeq" id="NP_001016061.1">
    <property type="nucleotide sequence ID" value="NM_001016061.2"/>
</dbReference>
<dbReference type="SMR" id="Q28EX9"/>
<dbReference type="FunCoup" id="Q28EX9">
    <property type="interactions" value="3494"/>
</dbReference>
<dbReference type="STRING" id="8364.ENSXETP00000027925"/>
<dbReference type="PaxDb" id="8364-ENSXETP00000035725"/>
<dbReference type="DNASU" id="548815"/>
<dbReference type="GeneID" id="548815"/>
<dbReference type="KEGG" id="xtr:548815"/>
<dbReference type="AGR" id="Xenbase:XB-GENE-5892709"/>
<dbReference type="CTD" id="134510"/>
<dbReference type="Xenbase" id="XB-GENE-5892709">
    <property type="gene designation" value="ublcp1"/>
</dbReference>
<dbReference type="eggNOG" id="KOG1605">
    <property type="taxonomic scope" value="Eukaryota"/>
</dbReference>
<dbReference type="eggNOG" id="KOG1872">
    <property type="taxonomic scope" value="Eukaryota"/>
</dbReference>
<dbReference type="HOGENOM" id="CLU_1317152_0_0_1"/>
<dbReference type="InParanoid" id="Q28EX9"/>
<dbReference type="OMA" id="TVHTPKY"/>
<dbReference type="OrthoDB" id="1711508at2759"/>
<dbReference type="Proteomes" id="UP000008143">
    <property type="component" value="Chromosome 3"/>
</dbReference>
<dbReference type="Bgee" id="ENSXETG00000016360">
    <property type="expression patterns" value="Expressed in skeletal muscle tissue and 13 other cell types or tissues"/>
</dbReference>
<dbReference type="GO" id="GO:0005634">
    <property type="term" value="C:nucleus"/>
    <property type="evidence" value="ECO:0007669"/>
    <property type="project" value="UniProtKB-SubCell"/>
</dbReference>
<dbReference type="GO" id="GO:0046872">
    <property type="term" value="F:metal ion binding"/>
    <property type="evidence" value="ECO:0007669"/>
    <property type="project" value="UniProtKB-KW"/>
</dbReference>
<dbReference type="GO" id="GO:0004722">
    <property type="term" value="F:protein serine/threonine phosphatase activity"/>
    <property type="evidence" value="ECO:0007669"/>
    <property type="project" value="UniProtKB-EC"/>
</dbReference>
<dbReference type="GO" id="GO:0090364">
    <property type="term" value="P:regulation of proteasome assembly"/>
    <property type="evidence" value="ECO:0007669"/>
    <property type="project" value="InterPro"/>
</dbReference>
<dbReference type="CDD" id="cd01813">
    <property type="entry name" value="Ubl_UBLCP1"/>
    <property type="match status" value="1"/>
</dbReference>
<dbReference type="FunFam" id="3.40.50.1000:FF:000050">
    <property type="entry name" value="Ubiquitin-like domain-containing CTD phosphatase 1"/>
    <property type="match status" value="1"/>
</dbReference>
<dbReference type="FunFam" id="3.10.20.90:FF:000060">
    <property type="entry name" value="ubiquitin-like domain-containing CTD phosphatase 1"/>
    <property type="match status" value="1"/>
</dbReference>
<dbReference type="Gene3D" id="3.40.50.1000">
    <property type="entry name" value="HAD superfamily/HAD-like"/>
    <property type="match status" value="1"/>
</dbReference>
<dbReference type="Gene3D" id="3.10.20.90">
    <property type="entry name" value="Phosphatidylinositol 3-kinase Catalytic Subunit, Chain A, domain 1"/>
    <property type="match status" value="1"/>
</dbReference>
<dbReference type="InterPro" id="IPR004274">
    <property type="entry name" value="FCP1_dom"/>
</dbReference>
<dbReference type="InterPro" id="IPR036412">
    <property type="entry name" value="HAD-like_sf"/>
</dbReference>
<dbReference type="InterPro" id="IPR011943">
    <property type="entry name" value="HAD-SF_hydro_IIID"/>
</dbReference>
<dbReference type="InterPro" id="IPR023214">
    <property type="entry name" value="HAD_sf"/>
</dbReference>
<dbReference type="InterPro" id="IPR000626">
    <property type="entry name" value="Ubiquitin-like_dom"/>
</dbReference>
<dbReference type="InterPro" id="IPR029071">
    <property type="entry name" value="Ubiquitin-like_domsf"/>
</dbReference>
<dbReference type="InterPro" id="IPR051658">
    <property type="entry name" value="UBLCP1"/>
</dbReference>
<dbReference type="NCBIfam" id="TIGR02245">
    <property type="entry name" value="HAD_IIID1"/>
    <property type="match status" value="1"/>
</dbReference>
<dbReference type="PANTHER" id="PTHR48493">
    <property type="entry name" value="UBIQUITIN-LIKE DOMAIN-CONTAINING CTD PHOSPHATASE 1"/>
    <property type="match status" value="1"/>
</dbReference>
<dbReference type="PANTHER" id="PTHR48493:SF1">
    <property type="entry name" value="UBIQUITIN-LIKE DOMAIN-CONTAINING CTD PHOSPHATASE 1"/>
    <property type="match status" value="1"/>
</dbReference>
<dbReference type="Pfam" id="PF03031">
    <property type="entry name" value="NIF"/>
    <property type="match status" value="1"/>
</dbReference>
<dbReference type="Pfam" id="PF00240">
    <property type="entry name" value="ubiquitin"/>
    <property type="match status" value="1"/>
</dbReference>
<dbReference type="SMART" id="SM00577">
    <property type="entry name" value="CPDc"/>
    <property type="match status" value="1"/>
</dbReference>
<dbReference type="SMART" id="SM00213">
    <property type="entry name" value="UBQ"/>
    <property type="match status" value="1"/>
</dbReference>
<dbReference type="SUPFAM" id="SSF56784">
    <property type="entry name" value="HAD-like"/>
    <property type="match status" value="1"/>
</dbReference>
<dbReference type="SUPFAM" id="SSF54236">
    <property type="entry name" value="Ubiquitin-like"/>
    <property type="match status" value="1"/>
</dbReference>
<dbReference type="PROSITE" id="PS50969">
    <property type="entry name" value="FCP1"/>
    <property type="match status" value="1"/>
</dbReference>
<dbReference type="PROSITE" id="PS50053">
    <property type="entry name" value="UBIQUITIN_2"/>
    <property type="match status" value="1"/>
</dbReference>
<evidence type="ECO:0000250" key="1">
    <source>
        <dbReference type="UniProtKB" id="Q8WVY7"/>
    </source>
</evidence>
<evidence type="ECO:0000250" key="2">
    <source>
        <dbReference type="UniProtKB" id="Q9XZ16"/>
    </source>
</evidence>
<evidence type="ECO:0000255" key="3">
    <source>
        <dbReference type="PROSITE-ProRule" id="PRU00214"/>
    </source>
</evidence>
<evidence type="ECO:0000255" key="4">
    <source>
        <dbReference type="PROSITE-ProRule" id="PRU00336"/>
    </source>
</evidence>
<feature type="chain" id="PRO_0000242647" description="Ubiquitin-like domain-containing CTD phosphatase 1">
    <location>
        <begin position="1"/>
        <end position="318"/>
    </location>
</feature>
<feature type="domain" description="Ubiquitin-like" evidence="3">
    <location>
        <begin position="3"/>
        <end position="81"/>
    </location>
</feature>
<feature type="domain" description="FCP1 homology" evidence="4">
    <location>
        <begin position="133"/>
        <end position="294"/>
    </location>
</feature>
<feature type="binding site" evidence="2">
    <location>
        <position position="143"/>
    </location>
    <ligand>
        <name>Mg(2+)</name>
        <dbReference type="ChEBI" id="CHEBI:18420"/>
    </ligand>
</feature>
<feature type="binding site" evidence="2">
    <location>
        <position position="145"/>
    </location>
    <ligand>
        <name>Mg(2+)</name>
        <dbReference type="ChEBI" id="CHEBI:18420"/>
    </ligand>
</feature>
<feature type="binding site" evidence="2">
    <location>
        <position position="253"/>
    </location>
    <ligand>
        <name>Mg(2+)</name>
        <dbReference type="ChEBI" id="CHEBI:18420"/>
    </ligand>
</feature>
<proteinExistence type="evidence at transcript level"/>